<organism>
    <name type="scientific">Sinorhizobium medicae (strain WSM419)</name>
    <name type="common">Ensifer medicae</name>
    <dbReference type="NCBI Taxonomy" id="366394"/>
    <lineage>
        <taxon>Bacteria</taxon>
        <taxon>Pseudomonadati</taxon>
        <taxon>Pseudomonadota</taxon>
        <taxon>Alphaproteobacteria</taxon>
        <taxon>Hyphomicrobiales</taxon>
        <taxon>Rhizobiaceae</taxon>
        <taxon>Sinorhizobium/Ensifer group</taxon>
        <taxon>Sinorhizobium</taxon>
    </lineage>
</organism>
<keyword id="KW-0687">Ribonucleoprotein</keyword>
<keyword id="KW-0689">Ribosomal protein</keyword>
<keyword id="KW-0694">RNA-binding</keyword>
<keyword id="KW-0699">rRNA-binding</keyword>
<accession>A6U870</accession>
<gene>
    <name evidence="1" type="primary">rplX</name>
    <name type="ordered locus">Smed_0997</name>
</gene>
<feature type="chain" id="PRO_1000052315" description="Large ribosomal subunit protein uL24">
    <location>
        <begin position="1"/>
        <end position="103"/>
    </location>
</feature>
<name>RL24_SINMW</name>
<protein>
    <recommendedName>
        <fullName evidence="1">Large ribosomal subunit protein uL24</fullName>
    </recommendedName>
    <alternativeName>
        <fullName evidence="2">50S ribosomal protein L24</fullName>
    </alternativeName>
</protein>
<comment type="function">
    <text evidence="1">One of two assembly initiator proteins, it binds directly to the 5'-end of the 23S rRNA, where it nucleates assembly of the 50S subunit.</text>
</comment>
<comment type="function">
    <text evidence="1">One of the proteins that surrounds the polypeptide exit tunnel on the outside of the subunit.</text>
</comment>
<comment type="subunit">
    <text evidence="1">Part of the 50S ribosomal subunit.</text>
</comment>
<comment type="similarity">
    <text evidence="1">Belongs to the universal ribosomal protein uL24 family.</text>
</comment>
<sequence>MQKIRKGDKVVVLTGKDKGRTGEVIQVMPKEDRAVVRGVNVVKRHQRQTQNQEAGIITKEAPIHLSNIAIADPKDGKPTRVGFKIDGDKKVRVAKRSGDVIDG</sequence>
<dbReference type="EMBL" id="CP000738">
    <property type="protein sequence ID" value="ABR59850.1"/>
    <property type="molecule type" value="Genomic_DNA"/>
</dbReference>
<dbReference type="RefSeq" id="WP_011975178.1">
    <property type="nucleotide sequence ID" value="NC_009636.1"/>
</dbReference>
<dbReference type="RefSeq" id="YP_001326685.1">
    <property type="nucleotide sequence ID" value="NC_009636.1"/>
</dbReference>
<dbReference type="SMR" id="A6U870"/>
<dbReference type="STRING" id="366394.Smed_0997"/>
<dbReference type="GeneID" id="61614919"/>
<dbReference type="KEGG" id="smd:Smed_0997"/>
<dbReference type="PATRIC" id="fig|366394.8.peg.4118"/>
<dbReference type="eggNOG" id="COG0198">
    <property type="taxonomic scope" value="Bacteria"/>
</dbReference>
<dbReference type="HOGENOM" id="CLU_093315_2_2_5"/>
<dbReference type="OrthoDB" id="9807419at2"/>
<dbReference type="Proteomes" id="UP000001108">
    <property type="component" value="Chromosome"/>
</dbReference>
<dbReference type="GO" id="GO:1990904">
    <property type="term" value="C:ribonucleoprotein complex"/>
    <property type="evidence" value="ECO:0007669"/>
    <property type="project" value="UniProtKB-KW"/>
</dbReference>
<dbReference type="GO" id="GO:0005840">
    <property type="term" value="C:ribosome"/>
    <property type="evidence" value="ECO:0007669"/>
    <property type="project" value="UniProtKB-KW"/>
</dbReference>
<dbReference type="GO" id="GO:0019843">
    <property type="term" value="F:rRNA binding"/>
    <property type="evidence" value="ECO:0007669"/>
    <property type="project" value="UniProtKB-UniRule"/>
</dbReference>
<dbReference type="GO" id="GO:0003735">
    <property type="term" value="F:structural constituent of ribosome"/>
    <property type="evidence" value="ECO:0007669"/>
    <property type="project" value="InterPro"/>
</dbReference>
<dbReference type="GO" id="GO:0006412">
    <property type="term" value="P:translation"/>
    <property type="evidence" value="ECO:0007669"/>
    <property type="project" value="UniProtKB-UniRule"/>
</dbReference>
<dbReference type="CDD" id="cd06089">
    <property type="entry name" value="KOW_RPL26"/>
    <property type="match status" value="1"/>
</dbReference>
<dbReference type="FunFam" id="2.30.30.30:FF:000004">
    <property type="entry name" value="50S ribosomal protein L24"/>
    <property type="match status" value="1"/>
</dbReference>
<dbReference type="Gene3D" id="2.30.30.30">
    <property type="match status" value="1"/>
</dbReference>
<dbReference type="HAMAP" id="MF_01326_B">
    <property type="entry name" value="Ribosomal_uL24_B"/>
    <property type="match status" value="1"/>
</dbReference>
<dbReference type="InterPro" id="IPR005824">
    <property type="entry name" value="KOW"/>
</dbReference>
<dbReference type="InterPro" id="IPR014722">
    <property type="entry name" value="Rib_uL2_dom2"/>
</dbReference>
<dbReference type="InterPro" id="IPR003256">
    <property type="entry name" value="Ribosomal_uL24"/>
</dbReference>
<dbReference type="InterPro" id="IPR005825">
    <property type="entry name" value="Ribosomal_uL24_CS"/>
</dbReference>
<dbReference type="InterPro" id="IPR041988">
    <property type="entry name" value="Ribosomal_uL24_KOW"/>
</dbReference>
<dbReference type="InterPro" id="IPR008991">
    <property type="entry name" value="Translation_prot_SH3-like_sf"/>
</dbReference>
<dbReference type="NCBIfam" id="TIGR01079">
    <property type="entry name" value="rplX_bact"/>
    <property type="match status" value="1"/>
</dbReference>
<dbReference type="PANTHER" id="PTHR12903">
    <property type="entry name" value="MITOCHONDRIAL RIBOSOMAL PROTEIN L24"/>
    <property type="match status" value="1"/>
</dbReference>
<dbReference type="Pfam" id="PF00467">
    <property type="entry name" value="KOW"/>
    <property type="match status" value="1"/>
</dbReference>
<dbReference type="Pfam" id="PF17136">
    <property type="entry name" value="ribosomal_L24"/>
    <property type="match status" value="1"/>
</dbReference>
<dbReference type="SMART" id="SM00739">
    <property type="entry name" value="KOW"/>
    <property type="match status" value="1"/>
</dbReference>
<dbReference type="SUPFAM" id="SSF50104">
    <property type="entry name" value="Translation proteins SH3-like domain"/>
    <property type="match status" value="1"/>
</dbReference>
<dbReference type="PROSITE" id="PS01108">
    <property type="entry name" value="RIBOSOMAL_L24"/>
    <property type="match status" value="1"/>
</dbReference>
<proteinExistence type="inferred from homology"/>
<reference key="1">
    <citation type="submission" date="2007-06" db="EMBL/GenBank/DDBJ databases">
        <title>Complete sequence of Sinorhizobium medicae WSM419 chromosome.</title>
        <authorList>
            <consortium name="US DOE Joint Genome Institute"/>
            <person name="Copeland A."/>
            <person name="Lucas S."/>
            <person name="Lapidus A."/>
            <person name="Barry K."/>
            <person name="Glavina del Rio T."/>
            <person name="Dalin E."/>
            <person name="Tice H."/>
            <person name="Pitluck S."/>
            <person name="Chain P."/>
            <person name="Malfatti S."/>
            <person name="Shin M."/>
            <person name="Vergez L."/>
            <person name="Schmutz J."/>
            <person name="Larimer F."/>
            <person name="Land M."/>
            <person name="Hauser L."/>
            <person name="Kyrpides N."/>
            <person name="Mikhailova N."/>
            <person name="Reeve W.G."/>
            <person name="Richardson P."/>
        </authorList>
    </citation>
    <scope>NUCLEOTIDE SEQUENCE [LARGE SCALE GENOMIC DNA]</scope>
    <source>
        <strain>WSM419</strain>
    </source>
</reference>
<evidence type="ECO:0000255" key="1">
    <source>
        <dbReference type="HAMAP-Rule" id="MF_01326"/>
    </source>
</evidence>
<evidence type="ECO:0000305" key="2"/>